<dbReference type="EMBL" id="CP001196">
    <property type="protein sequence ID" value="ACI91408.1"/>
    <property type="molecule type" value="Genomic_DNA"/>
</dbReference>
<dbReference type="EMBL" id="CP002826">
    <property type="protein sequence ID" value="AEI04988.1"/>
    <property type="molecule type" value="Genomic_DNA"/>
</dbReference>
<dbReference type="RefSeq" id="WP_012561439.1">
    <property type="nucleotide sequence ID" value="NC_015684.1"/>
</dbReference>
<dbReference type="STRING" id="504832.OCA5_c02590"/>
<dbReference type="KEGG" id="oca:OCAR_4259"/>
<dbReference type="KEGG" id="ocg:OCA5_c02590"/>
<dbReference type="PATRIC" id="fig|504832.7.peg.275"/>
<dbReference type="eggNOG" id="COG2917">
    <property type="taxonomic scope" value="Bacteria"/>
</dbReference>
<dbReference type="HOGENOM" id="CLU_089554_1_1_5"/>
<dbReference type="OrthoDB" id="9788219at2"/>
<dbReference type="Proteomes" id="UP000007730">
    <property type="component" value="Chromosome"/>
</dbReference>
<dbReference type="GO" id="GO:0005886">
    <property type="term" value="C:plasma membrane"/>
    <property type="evidence" value="ECO:0007669"/>
    <property type="project" value="UniProtKB-SubCell"/>
</dbReference>
<dbReference type="HAMAP" id="MF_00189">
    <property type="entry name" value="YciB"/>
    <property type="match status" value="1"/>
</dbReference>
<dbReference type="InterPro" id="IPR006008">
    <property type="entry name" value="YciB"/>
</dbReference>
<dbReference type="NCBIfam" id="TIGR00997">
    <property type="entry name" value="ispZ"/>
    <property type="match status" value="1"/>
</dbReference>
<dbReference type="NCBIfam" id="NF001323">
    <property type="entry name" value="PRK00259.1-1"/>
    <property type="match status" value="1"/>
</dbReference>
<dbReference type="PANTHER" id="PTHR36917:SF1">
    <property type="entry name" value="INNER MEMBRANE-SPANNING PROTEIN YCIB"/>
    <property type="match status" value="1"/>
</dbReference>
<dbReference type="PANTHER" id="PTHR36917">
    <property type="entry name" value="INTRACELLULAR SEPTATION PROTEIN A-RELATED"/>
    <property type="match status" value="1"/>
</dbReference>
<dbReference type="Pfam" id="PF04279">
    <property type="entry name" value="IspA"/>
    <property type="match status" value="1"/>
</dbReference>
<protein>
    <recommendedName>
        <fullName evidence="1">Inner membrane-spanning protein YciB</fullName>
    </recommendedName>
</protein>
<reference key="1">
    <citation type="journal article" date="2008" name="J. Bacteriol.">
        <title>Genome sequence of the chemolithoautotrophic bacterium Oligotropha carboxidovorans OM5T.</title>
        <authorList>
            <person name="Paul D."/>
            <person name="Bridges S."/>
            <person name="Burgess S.C."/>
            <person name="Dandass Y."/>
            <person name="Lawrence M.L."/>
        </authorList>
    </citation>
    <scope>NUCLEOTIDE SEQUENCE [LARGE SCALE GENOMIC DNA]</scope>
    <source>
        <strain>ATCC 49405 / DSM 1227 / KCTC 32145 / OM5</strain>
    </source>
</reference>
<reference key="2">
    <citation type="journal article" date="2011" name="J. Bacteriol.">
        <title>Complete genome sequences of the chemolithoautotrophic Oligotropha carboxidovorans strains OM4 and OM5.</title>
        <authorList>
            <person name="Volland S."/>
            <person name="Rachinger M."/>
            <person name="Strittmatter A."/>
            <person name="Daniel R."/>
            <person name="Gottschalk G."/>
            <person name="Meyer O."/>
        </authorList>
    </citation>
    <scope>NUCLEOTIDE SEQUENCE [LARGE SCALE GENOMIC DNA]</scope>
    <source>
        <strain>ATCC 49405 / DSM 1227 / KCTC 32145 / OM5</strain>
    </source>
</reference>
<comment type="function">
    <text evidence="1">Plays a role in cell envelope biogenesis, maintenance of cell envelope integrity and membrane homeostasis.</text>
</comment>
<comment type="subcellular location">
    <subcellularLocation>
        <location evidence="1">Cell inner membrane</location>
        <topology evidence="1">Multi-pass membrane protein</topology>
    </subcellularLocation>
</comment>
<comment type="similarity">
    <text evidence="1">Belongs to the YciB family.</text>
</comment>
<gene>
    <name evidence="1" type="primary">yciB</name>
    <name type="ordered locus">OCAR_4259</name>
    <name type="ordered locus">OCA5_c02590</name>
</gene>
<evidence type="ECO:0000255" key="1">
    <source>
        <dbReference type="HAMAP-Rule" id="MF_00189"/>
    </source>
</evidence>
<keyword id="KW-0997">Cell inner membrane</keyword>
<keyword id="KW-1003">Cell membrane</keyword>
<keyword id="KW-0472">Membrane</keyword>
<keyword id="KW-1185">Reference proteome</keyword>
<keyword id="KW-0812">Transmembrane</keyword>
<keyword id="KW-1133">Transmembrane helix</keyword>
<organism>
    <name type="scientific">Afipia carboxidovorans (strain ATCC 49405 / DSM 1227 / KCTC 32145 / OM5)</name>
    <name type="common">Oligotropha carboxidovorans</name>
    <dbReference type="NCBI Taxonomy" id="504832"/>
    <lineage>
        <taxon>Bacteria</taxon>
        <taxon>Pseudomonadati</taxon>
        <taxon>Pseudomonadota</taxon>
        <taxon>Alphaproteobacteria</taxon>
        <taxon>Hyphomicrobiales</taxon>
        <taxon>Nitrobacteraceae</taxon>
        <taxon>Afipia</taxon>
    </lineage>
</organism>
<proteinExistence type="inferred from homology"/>
<feature type="chain" id="PRO_1000098888" description="Inner membrane-spanning protein YciB">
    <location>
        <begin position="1"/>
        <end position="200"/>
    </location>
</feature>
<feature type="transmembrane region" description="Helical" evidence="1">
    <location>
        <begin position="32"/>
        <end position="52"/>
    </location>
</feature>
<feature type="transmembrane region" description="Helical" evidence="1">
    <location>
        <begin position="56"/>
        <end position="76"/>
    </location>
</feature>
<feature type="transmembrane region" description="Helical" evidence="1">
    <location>
        <begin position="93"/>
        <end position="113"/>
    </location>
</feature>
<feature type="transmembrane region" description="Helical" evidence="1">
    <location>
        <begin position="126"/>
        <end position="146"/>
    </location>
</feature>
<feature type="transmembrane region" description="Helical" evidence="1">
    <location>
        <begin position="153"/>
        <end position="173"/>
    </location>
</feature>
<sequence>MDKRVPHPLFKLATELGPLLIFFAANAKFNLFVATGAFMVAIVAAVIVSYVVMRHVPLMALVTAVIVLVFGGLTLVLHDETFIKIKPTIIYALFAVTLYVGLMLGRSFIAILFDQVFNLTPEGWRFLTIRWARFFLFMAVLNEVIWRTQSTDFWVAFKAFGVIPLTAVFAMTQMPLVKRYQIAEATAEASDSERGDTSPR</sequence>
<accession>B6JAN9</accession>
<accession>F8BTE3</accession>
<name>YCIB_AFIC5</name>